<accession>Q9DCX7</accession>
<accession>Q96LY0</accession>
<proteinExistence type="evidence at protein level"/>
<comment type="function">
    <text evidence="3 4">Regulator of plasma phosphate homeostasis. Decreases serum inorganic phosphate (Pi) uptake by regulating the sodium-phosphate cotransporter SLC34A1 trafficking by PTH and FGF23 in the kidney.</text>
</comment>
<comment type="subunit">
    <text evidence="3 4">Interacts with SLC34A1; regulates SLC34A1 internalization by PTH and FGF23.</text>
</comment>
<comment type="subcellular location">
    <subcellularLocation>
        <location evidence="1">Endoplasmic reticulum membrane</location>
        <topology evidence="2">Multi-pass membrane protein</topology>
    </subcellularLocation>
    <subcellularLocation>
        <location evidence="3">Apical cell membrane</location>
        <topology evidence="2">Multi-pass membrane protein</topology>
    </subcellularLocation>
    <text evidence="4">Colocalizes with SLC34A1 in the plasma membrane of renal proximal tubule cells.</text>
</comment>
<comment type="tissue specificity">
    <text evidence="3 4">Kidney specific (PubMed:35428804, PubMed:35459732). Expressed in renal primary proximal tubule cells (PubMed:35428804).</text>
</comment>
<comment type="induction">
    <text evidence="3">Up-regulated by low-phosphate diet.</text>
</comment>
<comment type="disruption phenotype">
    <text evidence="3 4">Tmem174-deficient mice show markedly increased serum levels of Pi, FGF23, and PTH, resulting in vascular calcification. In addition, deficient mice exhibit reduced SLC34A1 responsiveness to FGF23 and PTH administration.</text>
</comment>
<comment type="caution">
    <text evidence="1 5">A previous study found the localization of TMEM174 in the endoplasmic reticulum (By similarity). A more recent study detected TMEM174 in cell membrane (By similarity). The difference between these two studies could be due to the use of different cell lines.</text>
</comment>
<sequence>MEHSSNRPEDFPLNVFSVTPYTPSTADIQVSDDDKAGATLLFSGIFLGLVGITFTVMGWIKYQGVSHFEWTQLLGPILLSVGVTFILIAVCKFKMLSCQLCSDNEERVPDSDQTSGGQSFVFTGINQPITFHGATVVQYIPPPYGSQEPLGMNATYLQPMMNPCGLIPPSGAAAAAPSPPQYYTIYPQDNAAFVESEGFSPFVGTGYDRPDSDADQLEGTELEEEDCVCFSPPPYEEIYALPR</sequence>
<evidence type="ECO:0000250" key="1">
    <source>
        <dbReference type="UniProtKB" id="Q8WUU8"/>
    </source>
</evidence>
<evidence type="ECO:0000255" key="2"/>
<evidence type="ECO:0000269" key="3">
    <source>
    </source>
</evidence>
<evidence type="ECO:0000269" key="4">
    <source>
    </source>
</evidence>
<evidence type="ECO:0000305" key="5"/>
<dbReference type="EMBL" id="AK002365">
    <property type="protein sequence ID" value="BAB22043.1"/>
    <property type="molecule type" value="mRNA"/>
</dbReference>
<dbReference type="EMBL" id="AK057630">
    <property type="protein sequence ID" value="BAB71536.1"/>
    <property type="molecule type" value="mRNA"/>
</dbReference>
<dbReference type="EMBL" id="BC030878">
    <property type="protein sequence ID" value="AAH30878.1"/>
    <property type="molecule type" value="mRNA"/>
</dbReference>
<dbReference type="CCDS" id="CCDS26715.1"/>
<dbReference type="RefSeq" id="NP_080961.1">
    <property type="nucleotide sequence ID" value="NM_026685.2"/>
</dbReference>
<dbReference type="FunCoup" id="Q9DCX7">
    <property type="interactions" value="8"/>
</dbReference>
<dbReference type="STRING" id="10090.ENSMUSP00000057581"/>
<dbReference type="iPTMnet" id="Q9DCX7"/>
<dbReference type="PhosphoSitePlus" id="Q9DCX7"/>
<dbReference type="PaxDb" id="10090-ENSMUSP00000057581"/>
<dbReference type="ProteomicsDB" id="259465"/>
<dbReference type="Antibodypedia" id="48787">
    <property type="antibodies" value="44 antibodies from 15 providers"/>
</dbReference>
<dbReference type="DNASU" id="68344"/>
<dbReference type="Ensembl" id="ENSMUST00000050389.5">
    <property type="protein sequence ID" value="ENSMUSP00000057581.5"/>
    <property type="gene ID" value="ENSMUSG00000046082.5"/>
</dbReference>
<dbReference type="GeneID" id="68344"/>
<dbReference type="KEGG" id="mmu:68344"/>
<dbReference type="UCSC" id="uc011zdk.1">
    <property type="organism name" value="mouse"/>
</dbReference>
<dbReference type="AGR" id="MGI:1915594"/>
<dbReference type="CTD" id="134288"/>
<dbReference type="MGI" id="MGI:1915594">
    <property type="gene designation" value="Tmem174"/>
</dbReference>
<dbReference type="VEuPathDB" id="HostDB:ENSMUSG00000046082"/>
<dbReference type="eggNOG" id="ENOG502RZ98">
    <property type="taxonomic scope" value="Eukaryota"/>
</dbReference>
<dbReference type="GeneTree" id="ENSGT00390000004161"/>
<dbReference type="HOGENOM" id="CLU_099888_0_0_1"/>
<dbReference type="InParanoid" id="Q9DCX7"/>
<dbReference type="OMA" id="YYTIYPP"/>
<dbReference type="OrthoDB" id="9931655at2759"/>
<dbReference type="PhylomeDB" id="Q9DCX7"/>
<dbReference type="TreeFam" id="TF335512"/>
<dbReference type="BioGRID-ORCS" id="68344">
    <property type="hits" value="1 hit in 76 CRISPR screens"/>
</dbReference>
<dbReference type="PRO" id="PR:Q9DCX7"/>
<dbReference type="Proteomes" id="UP000000589">
    <property type="component" value="Chromosome 13"/>
</dbReference>
<dbReference type="RNAct" id="Q9DCX7">
    <property type="molecule type" value="protein"/>
</dbReference>
<dbReference type="Bgee" id="ENSMUSG00000046082">
    <property type="expression patterns" value="Expressed in adult mammalian kidney and 23 other cell types or tissues"/>
</dbReference>
<dbReference type="GO" id="GO:0016324">
    <property type="term" value="C:apical plasma membrane"/>
    <property type="evidence" value="ECO:0000314"/>
    <property type="project" value="UniProtKB"/>
</dbReference>
<dbReference type="GO" id="GO:0005789">
    <property type="term" value="C:endoplasmic reticulum membrane"/>
    <property type="evidence" value="ECO:0007669"/>
    <property type="project" value="UniProtKB-SubCell"/>
</dbReference>
<dbReference type="GO" id="GO:0055062">
    <property type="term" value="P:phosphate ion homeostasis"/>
    <property type="evidence" value="ECO:0000315"/>
    <property type="project" value="UniProtKB"/>
</dbReference>
<dbReference type="InterPro" id="IPR027835">
    <property type="entry name" value="TMEM174"/>
</dbReference>
<dbReference type="PANTHER" id="PTHR31020">
    <property type="entry name" value="TRANSMEMBRANE PROTEIN 174"/>
    <property type="match status" value="1"/>
</dbReference>
<dbReference type="PANTHER" id="PTHR31020:SF1">
    <property type="entry name" value="TRANSMEMBRANE PROTEIN 174"/>
    <property type="match status" value="1"/>
</dbReference>
<dbReference type="Pfam" id="PF15029">
    <property type="entry name" value="TMEM174"/>
    <property type="match status" value="1"/>
</dbReference>
<reference key="1">
    <citation type="journal article" date="2005" name="Science">
        <title>The transcriptional landscape of the mammalian genome.</title>
        <authorList>
            <person name="Carninci P."/>
            <person name="Kasukawa T."/>
            <person name="Katayama S."/>
            <person name="Gough J."/>
            <person name="Frith M.C."/>
            <person name="Maeda N."/>
            <person name="Oyama R."/>
            <person name="Ravasi T."/>
            <person name="Lenhard B."/>
            <person name="Wells C."/>
            <person name="Kodzius R."/>
            <person name="Shimokawa K."/>
            <person name="Bajic V.B."/>
            <person name="Brenner S.E."/>
            <person name="Batalov S."/>
            <person name="Forrest A.R."/>
            <person name="Zavolan M."/>
            <person name="Davis M.J."/>
            <person name="Wilming L.G."/>
            <person name="Aidinis V."/>
            <person name="Allen J.E."/>
            <person name="Ambesi-Impiombato A."/>
            <person name="Apweiler R."/>
            <person name="Aturaliya R.N."/>
            <person name="Bailey T.L."/>
            <person name="Bansal M."/>
            <person name="Baxter L."/>
            <person name="Beisel K.W."/>
            <person name="Bersano T."/>
            <person name="Bono H."/>
            <person name="Chalk A.M."/>
            <person name="Chiu K.P."/>
            <person name="Choudhary V."/>
            <person name="Christoffels A."/>
            <person name="Clutterbuck D.R."/>
            <person name="Crowe M.L."/>
            <person name="Dalla E."/>
            <person name="Dalrymple B.P."/>
            <person name="de Bono B."/>
            <person name="Della Gatta G."/>
            <person name="di Bernardo D."/>
            <person name="Down T."/>
            <person name="Engstrom P."/>
            <person name="Fagiolini M."/>
            <person name="Faulkner G."/>
            <person name="Fletcher C.F."/>
            <person name="Fukushima T."/>
            <person name="Furuno M."/>
            <person name="Futaki S."/>
            <person name="Gariboldi M."/>
            <person name="Georgii-Hemming P."/>
            <person name="Gingeras T.R."/>
            <person name="Gojobori T."/>
            <person name="Green R.E."/>
            <person name="Gustincich S."/>
            <person name="Harbers M."/>
            <person name="Hayashi Y."/>
            <person name="Hensch T.K."/>
            <person name="Hirokawa N."/>
            <person name="Hill D."/>
            <person name="Huminiecki L."/>
            <person name="Iacono M."/>
            <person name="Ikeo K."/>
            <person name="Iwama A."/>
            <person name="Ishikawa T."/>
            <person name="Jakt M."/>
            <person name="Kanapin A."/>
            <person name="Katoh M."/>
            <person name="Kawasawa Y."/>
            <person name="Kelso J."/>
            <person name="Kitamura H."/>
            <person name="Kitano H."/>
            <person name="Kollias G."/>
            <person name="Krishnan S.P."/>
            <person name="Kruger A."/>
            <person name="Kummerfeld S.K."/>
            <person name="Kurochkin I.V."/>
            <person name="Lareau L.F."/>
            <person name="Lazarevic D."/>
            <person name="Lipovich L."/>
            <person name="Liu J."/>
            <person name="Liuni S."/>
            <person name="McWilliam S."/>
            <person name="Madan Babu M."/>
            <person name="Madera M."/>
            <person name="Marchionni L."/>
            <person name="Matsuda H."/>
            <person name="Matsuzawa S."/>
            <person name="Miki H."/>
            <person name="Mignone F."/>
            <person name="Miyake S."/>
            <person name="Morris K."/>
            <person name="Mottagui-Tabar S."/>
            <person name="Mulder N."/>
            <person name="Nakano N."/>
            <person name="Nakauchi H."/>
            <person name="Ng P."/>
            <person name="Nilsson R."/>
            <person name="Nishiguchi S."/>
            <person name="Nishikawa S."/>
            <person name="Nori F."/>
            <person name="Ohara O."/>
            <person name="Okazaki Y."/>
            <person name="Orlando V."/>
            <person name="Pang K.C."/>
            <person name="Pavan W.J."/>
            <person name="Pavesi G."/>
            <person name="Pesole G."/>
            <person name="Petrovsky N."/>
            <person name="Piazza S."/>
            <person name="Reed J."/>
            <person name="Reid J.F."/>
            <person name="Ring B.Z."/>
            <person name="Ringwald M."/>
            <person name="Rost B."/>
            <person name="Ruan Y."/>
            <person name="Salzberg S.L."/>
            <person name="Sandelin A."/>
            <person name="Schneider C."/>
            <person name="Schoenbach C."/>
            <person name="Sekiguchi K."/>
            <person name="Semple C.A."/>
            <person name="Seno S."/>
            <person name="Sessa L."/>
            <person name="Sheng Y."/>
            <person name="Shibata Y."/>
            <person name="Shimada H."/>
            <person name="Shimada K."/>
            <person name="Silva D."/>
            <person name="Sinclair B."/>
            <person name="Sperling S."/>
            <person name="Stupka E."/>
            <person name="Sugiura K."/>
            <person name="Sultana R."/>
            <person name="Takenaka Y."/>
            <person name="Taki K."/>
            <person name="Tammoja K."/>
            <person name="Tan S.L."/>
            <person name="Tang S."/>
            <person name="Taylor M.S."/>
            <person name="Tegner J."/>
            <person name="Teichmann S.A."/>
            <person name="Ueda H.R."/>
            <person name="van Nimwegen E."/>
            <person name="Verardo R."/>
            <person name="Wei C.L."/>
            <person name="Yagi K."/>
            <person name="Yamanishi H."/>
            <person name="Zabarovsky E."/>
            <person name="Zhu S."/>
            <person name="Zimmer A."/>
            <person name="Hide W."/>
            <person name="Bult C."/>
            <person name="Grimmond S.M."/>
            <person name="Teasdale R.D."/>
            <person name="Liu E.T."/>
            <person name="Brusic V."/>
            <person name="Quackenbush J."/>
            <person name="Wahlestedt C."/>
            <person name="Mattick J.S."/>
            <person name="Hume D.A."/>
            <person name="Kai C."/>
            <person name="Sasaki D."/>
            <person name="Tomaru Y."/>
            <person name="Fukuda S."/>
            <person name="Kanamori-Katayama M."/>
            <person name="Suzuki M."/>
            <person name="Aoki J."/>
            <person name="Arakawa T."/>
            <person name="Iida J."/>
            <person name="Imamura K."/>
            <person name="Itoh M."/>
            <person name="Kato T."/>
            <person name="Kawaji H."/>
            <person name="Kawagashira N."/>
            <person name="Kawashima T."/>
            <person name="Kojima M."/>
            <person name="Kondo S."/>
            <person name="Konno H."/>
            <person name="Nakano K."/>
            <person name="Ninomiya N."/>
            <person name="Nishio T."/>
            <person name="Okada M."/>
            <person name="Plessy C."/>
            <person name="Shibata K."/>
            <person name="Shiraki T."/>
            <person name="Suzuki S."/>
            <person name="Tagami M."/>
            <person name="Waki K."/>
            <person name="Watahiki A."/>
            <person name="Okamura-Oho Y."/>
            <person name="Suzuki H."/>
            <person name="Kawai J."/>
            <person name="Hayashizaki Y."/>
        </authorList>
    </citation>
    <scope>NUCLEOTIDE SEQUENCE [LARGE SCALE MRNA]</scope>
    <source>
        <strain>C57BL/6J</strain>
        <tissue>Kidney</tissue>
    </source>
</reference>
<reference key="2">
    <citation type="submission" date="2001-10" db="EMBL/GenBank/DDBJ databases">
        <title>NEDO cDNA sequencing project.</title>
        <authorList>
            <person name="Suzuki O."/>
            <person name="Sasaki N."/>
            <person name="Aotsuka S."/>
            <person name="Shoji T."/>
            <person name="Ichihara T."/>
            <person name="Shiohata N."/>
            <person name="Matsumoto K."/>
            <person name="Hirano M."/>
            <person name="Sano S."/>
            <person name="Nomura R."/>
            <person name="Yoshikawa Y."/>
            <person name="Matsumura Y."/>
            <person name="Moriya S."/>
            <person name="Chiba E."/>
            <person name="Momiyama H."/>
            <person name="Onogawa S."/>
            <person name="Kaeriyama S."/>
            <person name="Satoh N."/>
            <person name="Matsunawa H."/>
            <person name="Takahashi E."/>
            <person name="Kataoka R."/>
            <person name="Kuga N."/>
            <person name="Kuroda A."/>
            <person name="Satoh I."/>
            <person name="Kamata K."/>
            <person name="Takami S."/>
            <person name="Terashima Y."/>
            <person name="Watanabe M."/>
            <person name="Sugiyama T."/>
            <person name="Irie R."/>
            <person name="Otsuki T."/>
            <person name="Sato H."/>
            <person name="Ota T."/>
            <person name="Wakamatsu A."/>
            <person name="Ishii S."/>
            <person name="Yamamoto J."/>
            <person name="Isono Y."/>
            <person name="Kawai-Hio Y."/>
            <person name="Saito K."/>
            <person name="Nishikawa T."/>
            <person name="Kimura K."/>
            <person name="Yamashita H."/>
            <person name="Matsuo K."/>
            <person name="Nakamura Y."/>
            <person name="Sekine M."/>
            <person name="Kikuchi H."/>
            <person name="Kanda K."/>
            <person name="Wagatsuma M."/>
            <person name="Murakawa K."/>
            <person name="Kanehori K."/>
            <person name="Takahashi-Fujii A."/>
            <person name="Oshima A."/>
            <person name="Sugiyama A."/>
            <person name="Kawakami B."/>
            <person name="Suzuki Y."/>
            <person name="Sugano S."/>
            <person name="Nagahari K."/>
            <person name="Masuho Y."/>
            <person name="Nagai K."/>
            <person name="Isogai T."/>
        </authorList>
    </citation>
    <scope>NUCLEOTIDE SEQUENCE [LARGE SCALE MRNA]</scope>
</reference>
<reference key="3">
    <citation type="journal article" date="2004" name="Genome Res.">
        <title>The status, quality, and expansion of the NIH full-length cDNA project: the Mammalian Gene Collection (MGC).</title>
        <authorList>
            <consortium name="The MGC Project Team"/>
        </authorList>
    </citation>
    <scope>NUCLEOTIDE SEQUENCE [LARGE SCALE MRNA]</scope>
    <source>
        <strain>FVB/N</strain>
        <tissue>Kidney</tissue>
    </source>
</reference>
<reference key="4">
    <citation type="journal article" date="2010" name="Cell">
        <title>A tissue-specific atlas of mouse protein phosphorylation and expression.</title>
        <authorList>
            <person name="Huttlin E.L."/>
            <person name="Jedrychowski M.P."/>
            <person name="Elias J.E."/>
            <person name="Goswami T."/>
            <person name="Rad R."/>
            <person name="Beausoleil S.A."/>
            <person name="Villen J."/>
            <person name="Haas W."/>
            <person name="Sowa M.E."/>
            <person name="Gygi S.P."/>
        </authorList>
    </citation>
    <scope>IDENTIFICATION BY MASS SPECTROMETRY [LARGE SCALE ANALYSIS]</scope>
    <source>
        <tissue>Kidney</tissue>
    </source>
</reference>
<reference key="5">
    <citation type="journal article" date="2022" name="J. Am. Soc. Nephrol.">
        <title>Targeted Disruption of a Proximal Tubule-Specific TMEM174 Gene in Mice Causes Hyperphosphatemia and Vascular Calcification.</title>
        <authorList>
            <person name="Miyazaki-Anzai S."/>
            <person name="Keenan A.L."/>
            <person name="Blaine J."/>
            <person name="Miyazaki M."/>
        </authorList>
    </citation>
    <scope>DISRUPTION PHENOTYPE</scope>
    <scope>FUNCTION</scope>
    <scope>TISSUE SPECIFICITY</scope>
    <scope>INTERACTION WITH SLC34A1</scope>
</reference>
<reference key="6">
    <citation type="journal article" date="2022" name="Sci. Rep.">
        <title>Tmem174, a regulator of phosphate transporter prevents hyperphosphatemia.</title>
        <authorList>
            <person name="Sasaki S."/>
            <person name="Shiozaki Y."/>
            <person name="Hanazaki A."/>
            <person name="Koike M."/>
            <person name="Tanifuji K."/>
            <person name="Uga M."/>
            <person name="Kawahara K."/>
            <person name="Kaneko I."/>
            <person name="Kawamoto Y."/>
            <person name="Wiriyasermkul P."/>
            <person name="Hasegawa T."/>
            <person name="Amizuka N."/>
            <person name="Miyamoto K.I."/>
            <person name="Nagamori S."/>
            <person name="Kanai Y."/>
            <person name="Segawa H."/>
        </authorList>
    </citation>
    <scope>DISRUPTION PHENOTYPE</scope>
    <scope>INDUCTION</scope>
    <scope>FUNCTION</scope>
    <scope>SUBCELLULAR LOCATION</scope>
    <scope>TISSUE SPECIFICITY</scope>
    <scope>INTERACTION WITH SLC34A1</scope>
</reference>
<protein>
    <recommendedName>
        <fullName>Transmembrane protein 174</fullName>
    </recommendedName>
</protein>
<name>TM174_MOUSE</name>
<keyword id="KW-1003">Cell membrane</keyword>
<keyword id="KW-0256">Endoplasmic reticulum</keyword>
<keyword id="KW-0472">Membrane</keyword>
<keyword id="KW-1185">Reference proteome</keyword>
<keyword id="KW-0812">Transmembrane</keyword>
<keyword id="KW-1133">Transmembrane helix</keyword>
<feature type="chain" id="PRO_0000282578" description="Transmembrane protein 174">
    <location>
        <begin position="1"/>
        <end position="243"/>
    </location>
</feature>
<feature type="transmembrane region" description="Helical" evidence="2">
    <location>
        <begin position="40"/>
        <end position="60"/>
    </location>
</feature>
<feature type="transmembrane region" description="Helical" evidence="2">
    <location>
        <begin position="73"/>
        <end position="93"/>
    </location>
</feature>
<feature type="sequence conflict" description="In Ref. 2; BAB71536." evidence="5" ref="2">
    <original>L</original>
    <variation>P</variation>
    <location>
        <position position="79"/>
    </location>
</feature>
<organism>
    <name type="scientific">Mus musculus</name>
    <name type="common">Mouse</name>
    <dbReference type="NCBI Taxonomy" id="10090"/>
    <lineage>
        <taxon>Eukaryota</taxon>
        <taxon>Metazoa</taxon>
        <taxon>Chordata</taxon>
        <taxon>Craniata</taxon>
        <taxon>Vertebrata</taxon>
        <taxon>Euteleostomi</taxon>
        <taxon>Mammalia</taxon>
        <taxon>Eutheria</taxon>
        <taxon>Euarchontoglires</taxon>
        <taxon>Glires</taxon>
        <taxon>Rodentia</taxon>
        <taxon>Myomorpha</taxon>
        <taxon>Muroidea</taxon>
        <taxon>Muridae</taxon>
        <taxon>Murinae</taxon>
        <taxon>Mus</taxon>
        <taxon>Mus</taxon>
    </lineage>
</organism>
<gene>
    <name type="primary">Tmem174</name>
</gene>